<name>ZMAT5_HUMAN</name>
<comment type="subunit">
    <text evidence="3">Component of the U11/U12 snRNPs that are part of the U12-type spliceosome. Not found in the major spliceosome.</text>
</comment>
<comment type="interaction">
    <interactant intactId="EBI-7850213">
        <id>Q9UDW3</id>
    </interactant>
    <interactant intactId="EBI-8643161">
        <id>Q9NX04</id>
        <label>AIRIM</label>
    </interactant>
    <organismsDiffer>false</organismsDiffer>
    <experiments>3</experiments>
</comment>
<comment type="interaction">
    <interactant intactId="EBI-7850213">
        <id>Q9UDW3</id>
    </interactant>
    <interactant intactId="EBI-742909">
        <id>Q9H6L4</id>
        <label>ARMC7</label>
    </interactant>
    <organismsDiffer>false</organismsDiffer>
    <experiments>3</experiments>
</comment>
<comment type="interaction">
    <interactant intactId="EBI-7850213">
        <id>Q9UDW3</id>
    </interactant>
    <interactant intactId="EBI-358049">
        <id>Q13895</id>
        <label>BYSL</label>
    </interactant>
    <organismsDiffer>false</organismsDiffer>
    <experiments>3</experiments>
</comment>
<comment type="interaction">
    <interactant intactId="EBI-7850213">
        <id>Q9UDW3</id>
    </interactant>
    <interactant intactId="EBI-744556">
        <id>Q96HB5</id>
        <label>CCDC120</label>
    </interactant>
    <organismsDiffer>false</organismsDiffer>
    <experiments>3</experiments>
</comment>
<comment type="interaction">
    <interactant intactId="EBI-7850213">
        <id>Q9UDW3</id>
    </interactant>
    <interactant intactId="EBI-10192698">
        <id>Q02930-3</id>
        <label>CREB5</label>
    </interactant>
    <organismsDiffer>false</organismsDiffer>
    <experiments>3</experiments>
</comment>
<comment type="interaction">
    <interactant intactId="EBI-7850213">
        <id>Q9UDW3</id>
    </interactant>
    <interactant intactId="EBI-2339898">
        <id>Q9NW38</id>
        <label>FANCL</label>
    </interactant>
    <organismsDiffer>false</organismsDiffer>
    <experiments>3</experiments>
</comment>
<comment type="interaction">
    <interactant intactId="EBI-7850213">
        <id>Q9UDW3</id>
    </interactant>
    <interactant intactId="EBI-744104">
        <id>P55040</id>
        <label>GEM</label>
    </interactant>
    <organismsDiffer>false</organismsDiffer>
    <experiments>3</experiments>
</comment>
<comment type="interaction">
    <interactant intactId="EBI-7850213">
        <id>Q9UDW3</id>
    </interactant>
    <interactant intactId="EBI-751540">
        <id>O95872</id>
        <label>GPANK1</label>
    </interactant>
    <organismsDiffer>false</organismsDiffer>
    <experiments>3</experiments>
</comment>
<comment type="interaction">
    <interactant intactId="EBI-7850213">
        <id>Q9UDW3</id>
    </interactant>
    <interactant intactId="EBI-1752118">
        <id>P31273</id>
        <label>HOXC8</label>
    </interactant>
    <organismsDiffer>false</organismsDiffer>
    <experiments>3</experiments>
</comment>
<comment type="interaction">
    <interactant intactId="EBI-7850213">
        <id>Q9UDW3</id>
    </interactant>
    <interactant intactId="EBI-744248">
        <id>P40692</id>
        <label>MLH1</label>
    </interactant>
    <organismsDiffer>false</organismsDiffer>
    <experiments>3</experiments>
</comment>
<comment type="interaction">
    <interactant intactId="EBI-7850213">
        <id>Q9UDW3</id>
    </interactant>
    <interactant intactId="EBI-10232538">
        <id>Q8WWB5</id>
        <label>PIH1D2</label>
    </interactant>
    <organismsDiffer>false</organismsDiffer>
    <experiments>3</experiments>
</comment>
<comment type="interaction">
    <interactant intactId="EBI-7850213">
        <id>Q9UDW3</id>
    </interactant>
    <interactant intactId="EBI-12069346">
        <id>Q6IQ23-2</id>
        <label>PLEKHA7</label>
    </interactant>
    <organismsDiffer>false</organismsDiffer>
    <experiments>3</experiments>
</comment>
<comment type="interaction">
    <interactant intactId="EBI-7850213">
        <id>Q9UDW3</id>
    </interactant>
    <interactant intactId="EBI-11987469">
        <id>Q6ZRY4</id>
        <label>RBPMS2</label>
    </interactant>
    <organismsDiffer>false</organismsDiffer>
    <experiments>3</experiments>
</comment>
<comment type="interaction">
    <interactant intactId="EBI-7850213">
        <id>Q9UDW3</id>
    </interactant>
    <interactant intactId="EBI-358489">
        <id>Q96GM5</id>
        <label>SMARCD1</label>
    </interactant>
    <organismsDiffer>false</organismsDiffer>
    <experiments>3</experiments>
</comment>
<comment type="interaction">
    <interactant intactId="EBI-7850213">
        <id>Q9UDW3</id>
    </interactant>
    <interactant intactId="EBI-740781">
        <id>Q9BT92</id>
        <label>TCHP</label>
    </interactant>
    <organismsDiffer>false</organismsDiffer>
    <experiments>3</experiments>
</comment>
<comment type="interaction">
    <interactant intactId="EBI-7850213">
        <id>Q9UDW3</id>
    </interactant>
    <interactant intactId="EBI-725997">
        <id>Q8WV44</id>
        <label>TRIM41</label>
    </interactant>
    <organismsDiffer>false</organismsDiffer>
    <experiments>3</experiments>
</comment>
<comment type="interaction">
    <interactant intactId="EBI-7850213">
        <id>Q9UDW3</id>
    </interactant>
    <interactant intactId="EBI-2559305">
        <id>A5D8V6</id>
        <label>VPS37C</label>
    </interactant>
    <organismsDiffer>false</organismsDiffer>
    <experiments>3</experiments>
</comment>
<comment type="interaction">
    <interactant intactId="EBI-7850213">
        <id>Q9UDW3</id>
    </interactant>
    <interactant intactId="EBI-740727">
        <id>Q8TAU3</id>
        <label>ZNF417</label>
    </interactant>
    <organismsDiffer>false</organismsDiffer>
    <experiments>3</experiments>
</comment>
<comment type="subcellular location">
    <subcellularLocation>
        <location evidence="3">Nucleus</location>
    </subcellularLocation>
</comment>
<reference key="1">
    <citation type="submission" date="2004-06" db="EMBL/GenBank/DDBJ databases">
        <title>Cloning of human full open reading frames in Gateway(TM) system entry vector (pDONR201).</title>
        <authorList>
            <person name="Ebert L."/>
            <person name="Schick M."/>
            <person name="Neubert P."/>
            <person name="Schatten R."/>
            <person name="Henze S."/>
            <person name="Korn B."/>
        </authorList>
    </citation>
    <scope>NUCLEOTIDE SEQUENCE [LARGE SCALE MRNA]</scope>
</reference>
<reference key="2">
    <citation type="journal article" date="2004" name="Genome Biol.">
        <title>A genome annotation-driven approach to cloning the human ORFeome.</title>
        <authorList>
            <person name="Collins J.E."/>
            <person name="Wright C.L."/>
            <person name="Edwards C.A."/>
            <person name="Davis M.P."/>
            <person name="Grinham J.A."/>
            <person name="Cole C.G."/>
            <person name="Goward M.E."/>
            <person name="Aguado B."/>
            <person name="Mallya M."/>
            <person name="Mokrab Y."/>
            <person name="Huckle E.J."/>
            <person name="Beare D.M."/>
            <person name="Dunham I."/>
        </authorList>
    </citation>
    <scope>NUCLEOTIDE SEQUENCE [LARGE SCALE MRNA]</scope>
</reference>
<reference key="3">
    <citation type="journal article" date="2004" name="Nat. Genet.">
        <title>Complete sequencing and characterization of 21,243 full-length human cDNAs.</title>
        <authorList>
            <person name="Ota T."/>
            <person name="Suzuki Y."/>
            <person name="Nishikawa T."/>
            <person name="Otsuki T."/>
            <person name="Sugiyama T."/>
            <person name="Irie R."/>
            <person name="Wakamatsu A."/>
            <person name="Hayashi K."/>
            <person name="Sato H."/>
            <person name="Nagai K."/>
            <person name="Kimura K."/>
            <person name="Makita H."/>
            <person name="Sekine M."/>
            <person name="Obayashi M."/>
            <person name="Nishi T."/>
            <person name="Shibahara T."/>
            <person name="Tanaka T."/>
            <person name="Ishii S."/>
            <person name="Yamamoto J."/>
            <person name="Saito K."/>
            <person name="Kawai Y."/>
            <person name="Isono Y."/>
            <person name="Nakamura Y."/>
            <person name="Nagahari K."/>
            <person name="Murakami K."/>
            <person name="Yasuda T."/>
            <person name="Iwayanagi T."/>
            <person name="Wagatsuma M."/>
            <person name="Shiratori A."/>
            <person name="Sudo H."/>
            <person name="Hosoiri T."/>
            <person name="Kaku Y."/>
            <person name="Kodaira H."/>
            <person name="Kondo H."/>
            <person name="Sugawara M."/>
            <person name="Takahashi M."/>
            <person name="Kanda K."/>
            <person name="Yokoi T."/>
            <person name="Furuya T."/>
            <person name="Kikkawa E."/>
            <person name="Omura Y."/>
            <person name="Abe K."/>
            <person name="Kamihara K."/>
            <person name="Katsuta N."/>
            <person name="Sato K."/>
            <person name="Tanikawa M."/>
            <person name="Yamazaki M."/>
            <person name="Ninomiya K."/>
            <person name="Ishibashi T."/>
            <person name="Yamashita H."/>
            <person name="Murakawa K."/>
            <person name="Fujimori K."/>
            <person name="Tanai H."/>
            <person name="Kimata M."/>
            <person name="Watanabe M."/>
            <person name="Hiraoka S."/>
            <person name="Chiba Y."/>
            <person name="Ishida S."/>
            <person name="Ono Y."/>
            <person name="Takiguchi S."/>
            <person name="Watanabe S."/>
            <person name="Yosida M."/>
            <person name="Hotuta T."/>
            <person name="Kusano J."/>
            <person name="Kanehori K."/>
            <person name="Takahashi-Fujii A."/>
            <person name="Hara H."/>
            <person name="Tanase T.-O."/>
            <person name="Nomura Y."/>
            <person name="Togiya S."/>
            <person name="Komai F."/>
            <person name="Hara R."/>
            <person name="Takeuchi K."/>
            <person name="Arita M."/>
            <person name="Imose N."/>
            <person name="Musashino K."/>
            <person name="Yuuki H."/>
            <person name="Oshima A."/>
            <person name="Sasaki N."/>
            <person name="Aotsuka S."/>
            <person name="Yoshikawa Y."/>
            <person name="Matsunawa H."/>
            <person name="Ichihara T."/>
            <person name="Shiohata N."/>
            <person name="Sano S."/>
            <person name="Moriya S."/>
            <person name="Momiyama H."/>
            <person name="Satoh N."/>
            <person name="Takami S."/>
            <person name="Terashima Y."/>
            <person name="Suzuki O."/>
            <person name="Nakagawa S."/>
            <person name="Senoh A."/>
            <person name="Mizoguchi H."/>
            <person name="Goto Y."/>
            <person name="Shimizu F."/>
            <person name="Wakebe H."/>
            <person name="Hishigaki H."/>
            <person name="Watanabe T."/>
            <person name="Sugiyama A."/>
            <person name="Takemoto M."/>
            <person name="Kawakami B."/>
            <person name="Yamazaki M."/>
            <person name="Watanabe K."/>
            <person name="Kumagai A."/>
            <person name="Itakura S."/>
            <person name="Fukuzumi Y."/>
            <person name="Fujimori Y."/>
            <person name="Komiyama M."/>
            <person name="Tashiro H."/>
            <person name="Tanigami A."/>
            <person name="Fujiwara T."/>
            <person name="Ono T."/>
            <person name="Yamada K."/>
            <person name="Fujii Y."/>
            <person name="Ozaki K."/>
            <person name="Hirao M."/>
            <person name="Ohmori Y."/>
            <person name="Kawabata A."/>
            <person name="Hikiji T."/>
            <person name="Kobatake N."/>
            <person name="Inagaki H."/>
            <person name="Ikema Y."/>
            <person name="Okamoto S."/>
            <person name="Okitani R."/>
            <person name="Kawakami T."/>
            <person name="Noguchi S."/>
            <person name="Itoh T."/>
            <person name="Shigeta K."/>
            <person name="Senba T."/>
            <person name="Matsumura K."/>
            <person name="Nakajima Y."/>
            <person name="Mizuno T."/>
            <person name="Morinaga M."/>
            <person name="Sasaki M."/>
            <person name="Togashi T."/>
            <person name="Oyama M."/>
            <person name="Hata H."/>
            <person name="Watanabe M."/>
            <person name="Komatsu T."/>
            <person name="Mizushima-Sugano J."/>
            <person name="Satoh T."/>
            <person name="Shirai Y."/>
            <person name="Takahashi Y."/>
            <person name="Nakagawa K."/>
            <person name="Okumura K."/>
            <person name="Nagase T."/>
            <person name="Nomura N."/>
            <person name="Kikuchi H."/>
            <person name="Masuho Y."/>
            <person name="Yamashita R."/>
            <person name="Nakai K."/>
            <person name="Yada T."/>
            <person name="Nakamura Y."/>
            <person name="Ohara O."/>
            <person name="Isogai T."/>
            <person name="Sugano S."/>
        </authorList>
    </citation>
    <scope>NUCLEOTIDE SEQUENCE [LARGE SCALE MRNA]</scope>
    <source>
        <tissue>Thymus</tissue>
    </source>
</reference>
<reference key="4">
    <citation type="submission" date="2005-07" db="EMBL/GenBank/DDBJ databases">
        <authorList>
            <person name="Mural R.J."/>
            <person name="Istrail S."/>
            <person name="Sutton G.G."/>
            <person name="Florea L."/>
            <person name="Halpern A.L."/>
            <person name="Mobarry C.M."/>
            <person name="Lippert R."/>
            <person name="Walenz B."/>
            <person name="Shatkay H."/>
            <person name="Dew I."/>
            <person name="Miller J.R."/>
            <person name="Flanigan M.J."/>
            <person name="Edwards N.J."/>
            <person name="Bolanos R."/>
            <person name="Fasulo D."/>
            <person name="Halldorsson B.V."/>
            <person name="Hannenhalli S."/>
            <person name="Turner R."/>
            <person name="Yooseph S."/>
            <person name="Lu F."/>
            <person name="Nusskern D.R."/>
            <person name="Shue B.C."/>
            <person name="Zheng X.H."/>
            <person name="Zhong F."/>
            <person name="Delcher A.L."/>
            <person name="Huson D.H."/>
            <person name="Kravitz S.A."/>
            <person name="Mouchard L."/>
            <person name="Reinert K."/>
            <person name="Remington K.A."/>
            <person name="Clark A.G."/>
            <person name="Waterman M.S."/>
            <person name="Eichler E.E."/>
            <person name="Adams M.D."/>
            <person name="Hunkapiller M.W."/>
            <person name="Myers E.W."/>
            <person name="Venter J.C."/>
        </authorList>
    </citation>
    <scope>NUCLEOTIDE SEQUENCE [LARGE SCALE GENOMIC DNA]</scope>
</reference>
<reference key="5">
    <citation type="journal article" date="2004" name="Genome Res.">
        <title>The status, quality, and expansion of the NIH full-length cDNA project: the Mammalian Gene Collection (MGC).</title>
        <authorList>
            <consortium name="The MGC Project Team"/>
        </authorList>
    </citation>
    <scope>NUCLEOTIDE SEQUENCE [LARGE SCALE MRNA]</scope>
    <source>
        <tissue>Lung</tissue>
    </source>
</reference>
<reference key="6">
    <citation type="journal article" date="2004" name="RNA">
        <title>The human 18S U11/U12 snRNP contains a set of novel proteins not found in the U2-dependent spliceosome.</title>
        <authorList>
            <person name="Will C.L."/>
            <person name="Schneider C."/>
            <person name="Hossbach M."/>
            <person name="Urlaub H."/>
            <person name="Rauhut R."/>
            <person name="Elbashir S."/>
            <person name="Tuschl T."/>
            <person name="Luehrmann R."/>
        </authorList>
    </citation>
    <scope>IDENTIFICATION IN A COMPLEX WITH THE U11/U12 SPLICEOSOME</scope>
    <scope>SUBCELLULAR LOCATION</scope>
    <scope>IDENTIFICATION BY MASS SPECTROMETRY</scope>
</reference>
<organism>
    <name type="scientific">Homo sapiens</name>
    <name type="common">Human</name>
    <dbReference type="NCBI Taxonomy" id="9606"/>
    <lineage>
        <taxon>Eukaryota</taxon>
        <taxon>Metazoa</taxon>
        <taxon>Chordata</taxon>
        <taxon>Craniata</taxon>
        <taxon>Vertebrata</taxon>
        <taxon>Euteleostomi</taxon>
        <taxon>Mammalia</taxon>
        <taxon>Eutheria</taxon>
        <taxon>Euarchontoglires</taxon>
        <taxon>Primates</taxon>
        <taxon>Haplorrhini</taxon>
        <taxon>Catarrhini</taxon>
        <taxon>Hominidae</taxon>
        <taxon>Homo</taxon>
    </lineage>
</organism>
<evidence type="ECO:0000255" key="1">
    <source>
        <dbReference type="PROSITE-ProRule" id="PRU00723"/>
    </source>
</evidence>
<evidence type="ECO:0000256" key="2">
    <source>
        <dbReference type="SAM" id="MobiDB-lite"/>
    </source>
</evidence>
<evidence type="ECO:0000269" key="3">
    <source>
    </source>
</evidence>
<keyword id="KW-0002">3D-structure</keyword>
<keyword id="KW-0479">Metal-binding</keyword>
<keyword id="KW-0507">mRNA processing</keyword>
<keyword id="KW-0508">mRNA splicing</keyword>
<keyword id="KW-0539">Nucleus</keyword>
<keyword id="KW-1267">Proteomics identification</keyword>
<keyword id="KW-1185">Reference proteome</keyword>
<keyword id="KW-0747">Spliceosome</keyword>
<keyword id="KW-0862">Zinc</keyword>
<keyword id="KW-0863">Zinc-finger</keyword>
<feature type="chain" id="PRO_0000254114" description="Zinc finger matrin-type protein 5">
    <location>
        <begin position="1"/>
        <end position="170"/>
    </location>
</feature>
<feature type="zinc finger region" description="C3H1-type" evidence="1">
    <location>
        <begin position="51"/>
        <end position="79"/>
    </location>
</feature>
<feature type="region of interest" description="Disordered" evidence="2">
    <location>
        <begin position="150"/>
        <end position="170"/>
    </location>
</feature>
<protein>
    <recommendedName>
        <fullName>Zinc finger matrin-type protein 5</fullName>
    </recommendedName>
    <alternativeName>
        <fullName>U11/U12 small nuclear ribonucleoprotein 20 kDa protein</fullName>
        <shortName>U11/U12 snRNP 20 kDa protein</shortName>
        <shortName>U11/U12-20K</shortName>
    </alternativeName>
</protein>
<gene>
    <name type="primary">ZMAT5</name>
</gene>
<sequence length="170" mass="19971">MGKRYFCDYCDRSFQDNLHNRKKHLNGLQHLKAKKVWYDMFRDAAAILLDEQNKRPCRKFLLTGQCDFGSNCRFSHMSERDLQELSIQVEEERRAREWLLDAPELPEGHLEDWLEKRAKRLSSAPSSRAEPIRTTVFQYPVGWPPVQELPPSLRAPPPGGWPLQPRVQWG</sequence>
<accession>Q9UDW3</accession>
<accession>A8K9F6</accession>
<proteinExistence type="evidence at protein level"/>
<dbReference type="EMBL" id="AL160311">
    <property type="protein sequence ID" value="CAB77284.1"/>
    <property type="molecule type" value="mRNA"/>
</dbReference>
<dbReference type="EMBL" id="CR456353">
    <property type="protein sequence ID" value="CAG30239.1"/>
    <property type="molecule type" value="mRNA"/>
</dbReference>
<dbReference type="EMBL" id="CR457393">
    <property type="protein sequence ID" value="CAG33674.1"/>
    <property type="molecule type" value="mRNA"/>
</dbReference>
<dbReference type="EMBL" id="AK292671">
    <property type="protein sequence ID" value="BAF85360.1"/>
    <property type="molecule type" value="mRNA"/>
</dbReference>
<dbReference type="EMBL" id="CH471095">
    <property type="protein sequence ID" value="EAW59837.1"/>
    <property type="molecule type" value="Genomic_DNA"/>
</dbReference>
<dbReference type="EMBL" id="BC009717">
    <property type="protein sequence ID" value="AAH09717.1"/>
    <property type="molecule type" value="mRNA"/>
</dbReference>
<dbReference type="EMBL" id="BK005198">
    <property type="protein sequence ID" value="DAA05496.1"/>
    <property type="molecule type" value="mRNA"/>
</dbReference>
<dbReference type="CCDS" id="CCDS13868.1"/>
<dbReference type="RefSeq" id="NP_001003692.1">
    <property type="nucleotide sequence ID" value="NM_001003692.2"/>
</dbReference>
<dbReference type="RefSeq" id="NP_001305058.1">
    <property type="nucleotide sequence ID" value="NM_001318129.2"/>
</dbReference>
<dbReference type="RefSeq" id="NP_061976.1">
    <property type="nucleotide sequence ID" value="NM_019103.3"/>
</dbReference>
<dbReference type="RefSeq" id="XP_054181770.1">
    <property type="nucleotide sequence ID" value="XM_054325795.1"/>
</dbReference>
<dbReference type="PDB" id="8R7N">
    <property type="method" value="EM"/>
    <property type="resolution" value="3.40 A"/>
    <property type="chains" value="E=1-170"/>
</dbReference>
<dbReference type="PDB" id="8Y6O">
    <property type="method" value="EM"/>
    <property type="resolution" value="3.38 A"/>
    <property type="chains" value="V=1-170"/>
</dbReference>
<dbReference type="PDB" id="9GBW">
    <property type="method" value="EM"/>
    <property type="resolution" value="3.50 A"/>
    <property type="chains" value="E=1-170"/>
</dbReference>
<dbReference type="PDB" id="9GC0">
    <property type="method" value="EM"/>
    <property type="resolution" value="3.20 A"/>
    <property type="chains" value="E=1-170"/>
</dbReference>
<dbReference type="PDB" id="9GCL">
    <property type="method" value="EM"/>
    <property type="resolution" value="3.00 A"/>
    <property type="chains" value="E=1-170"/>
</dbReference>
<dbReference type="PDBsum" id="8R7N"/>
<dbReference type="PDBsum" id="8Y6O"/>
<dbReference type="PDBsum" id="9GBW"/>
<dbReference type="PDBsum" id="9GC0"/>
<dbReference type="PDBsum" id="9GCL"/>
<dbReference type="EMDB" id="EMD-18984"/>
<dbReference type="EMDB" id="EMD-38993"/>
<dbReference type="EMDB" id="EMD-51223"/>
<dbReference type="EMDB" id="EMD-51226"/>
<dbReference type="EMDB" id="EMD-51233"/>
<dbReference type="SMR" id="Q9UDW3"/>
<dbReference type="BioGRID" id="121007">
    <property type="interactions" value="62"/>
</dbReference>
<dbReference type="CORUM" id="Q9UDW3"/>
<dbReference type="FunCoup" id="Q9UDW3">
    <property type="interactions" value="932"/>
</dbReference>
<dbReference type="IntAct" id="Q9UDW3">
    <property type="interactions" value="44"/>
</dbReference>
<dbReference type="MINT" id="Q9UDW3"/>
<dbReference type="STRING" id="9606.ENSP00000344241"/>
<dbReference type="iPTMnet" id="Q9UDW3"/>
<dbReference type="PhosphoSitePlus" id="Q9UDW3"/>
<dbReference type="BioMuta" id="ZMAT5"/>
<dbReference type="DMDM" id="74753269"/>
<dbReference type="jPOST" id="Q9UDW3"/>
<dbReference type="MassIVE" id="Q9UDW3"/>
<dbReference type="PaxDb" id="9606-ENSP00000344241"/>
<dbReference type="PeptideAtlas" id="Q9UDW3"/>
<dbReference type="ProteomicsDB" id="84122"/>
<dbReference type="Pumba" id="Q9UDW3"/>
<dbReference type="Antibodypedia" id="330">
    <property type="antibodies" value="48 antibodies from 12 providers"/>
</dbReference>
<dbReference type="DNASU" id="55954"/>
<dbReference type="Ensembl" id="ENST00000344318.4">
    <property type="protein sequence ID" value="ENSP00000344241.3"/>
    <property type="gene ID" value="ENSG00000100319.13"/>
</dbReference>
<dbReference type="GeneID" id="55954"/>
<dbReference type="KEGG" id="hsa:55954"/>
<dbReference type="MANE-Select" id="ENST00000344318.4">
    <property type="protein sequence ID" value="ENSP00000344241.3"/>
    <property type="RefSeq nucleotide sequence ID" value="NM_001003692.2"/>
    <property type="RefSeq protein sequence ID" value="NP_001003692.1"/>
</dbReference>
<dbReference type="UCSC" id="uc003agn.4">
    <property type="organism name" value="human"/>
</dbReference>
<dbReference type="AGR" id="HGNC:28046"/>
<dbReference type="CTD" id="55954"/>
<dbReference type="DisGeNET" id="55954"/>
<dbReference type="GeneCards" id="ZMAT5"/>
<dbReference type="HGNC" id="HGNC:28046">
    <property type="gene designation" value="ZMAT5"/>
</dbReference>
<dbReference type="HPA" id="ENSG00000100319">
    <property type="expression patterns" value="Low tissue specificity"/>
</dbReference>
<dbReference type="MIM" id="619741">
    <property type="type" value="gene"/>
</dbReference>
<dbReference type="neXtProt" id="NX_Q9UDW3"/>
<dbReference type="PharmGKB" id="PA142670524"/>
<dbReference type="VEuPathDB" id="HostDB:ENSG00000100319"/>
<dbReference type="eggNOG" id="KOG3454">
    <property type="taxonomic scope" value="Eukaryota"/>
</dbReference>
<dbReference type="GeneTree" id="ENSGT00390000009869"/>
<dbReference type="HOGENOM" id="CLU_100385_1_0_1"/>
<dbReference type="InParanoid" id="Q9UDW3"/>
<dbReference type="OMA" id="WPPIQEL"/>
<dbReference type="OrthoDB" id="2417221at2759"/>
<dbReference type="PAN-GO" id="Q9UDW3">
    <property type="GO annotations" value="1 GO annotation based on evolutionary models"/>
</dbReference>
<dbReference type="PhylomeDB" id="Q9UDW3"/>
<dbReference type="TreeFam" id="TF332784"/>
<dbReference type="PathwayCommons" id="Q9UDW3"/>
<dbReference type="Reactome" id="R-HSA-72165">
    <property type="pathway name" value="mRNA Splicing - Minor Pathway"/>
</dbReference>
<dbReference type="SignaLink" id="Q9UDW3"/>
<dbReference type="BioGRID-ORCS" id="55954">
    <property type="hits" value="611 hits in 1156 CRISPR screens"/>
</dbReference>
<dbReference type="ChiTaRS" id="ZMAT5">
    <property type="organism name" value="human"/>
</dbReference>
<dbReference type="GenomeRNAi" id="55954"/>
<dbReference type="Pharos" id="Q9UDW3">
    <property type="development level" value="Tdark"/>
</dbReference>
<dbReference type="PRO" id="PR:Q9UDW3"/>
<dbReference type="Proteomes" id="UP000005640">
    <property type="component" value="Chromosome 22"/>
</dbReference>
<dbReference type="RNAct" id="Q9UDW3">
    <property type="molecule type" value="protein"/>
</dbReference>
<dbReference type="Bgee" id="ENSG00000100319">
    <property type="expression patterns" value="Expressed in hindlimb stylopod muscle and 122 other cell types or tissues"/>
</dbReference>
<dbReference type="ExpressionAtlas" id="Q9UDW3">
    <property type="expression patterns" value="baseline and differential"/>
</dbReference>
<dbReference type="GO" id="GO:0005654">
    <property type="term" value="C:nucleoplasm"/>
    <property type="evidence" value="ECO:0000314"/>
    <property type="project" value="HPA"/>
</dbReference>
<dbReference type="GO" id="GO:0005689">
    <property type="term" value="C:U12-type spliceosomal complex"/>
    <property type="evidence" value="ECO:0000314"/>
    <property type="project" value="HGNC-UCL"/>
</dbReference>
<dbReference type="GO" id="GO:0008270">
    <property type="term" value="F:zinc ion binding"/>
    <property type="evidence" value="ECO:0007669"/>
    <property type="project" value="UniProtKB-KW"/>
</dbReference>
<dbReference type="GO" id="GO:0006397">
    <property type="term" value="P:mRNA processing"/>
    <property type="evidence" value="ECO:0007669"/>
    <property type="project" value="UniProtKB-KW"/>
</dbReference>
<dbReference type="GO" id="GO:0008380">
    <property type="term" value="P:RNA splicing"/>
    <property type="evidence" value="ECO:0000305"/>
    <property type="project" value="HGNC-UCL"/>
</dbReference>
<dbReference type="FunFam" id="3.30.160.60:FF:000741">
    <property type="entry name" value="Zinc finger matrin-type protein 5"/>
    <property type="match status" value="1"/>
</dbReference>
<dbReference type="FunFam" id="4.10.1000.10:FF:000025">
    <property type="entry name" value="Zinc finger matrin-type protein 5"/>
    <property type="match status" value="1"/>
</dbReference>
<dbReference type="Gene3D" id="3.30.160.60">
    <property type="entry name" value="Classic Zinc Finger"/>
    <property type="match status" value="1"/>
</dbReference>
<dbReference type="Gene3D" id="4.10.1000.10">
    <property type="entry name" value="Zinc finger, CCCH-type"/>
    <property type="match status" value="1"/>
</dbReference>
<dbReference type="InterPro" id="IPR013085">
    <property type="entry name" value="U1-CZ_Znf_C2H2"/>
</dbReference>
<dbReference type="InterPro" id="IPR036236">
    <property type="entry name" value="Znf_C2H2_sf"/>
</dbReference>
<dbReference type="InterPro" id="IPR000571">
    <property type="entry name" value="Znf_CCCH"/>
</dbReference>
<dbReference type="InterPro" id="IPR036855">
    <property type="entry name" value="Znf_CCCH_sf"/>
</dbReference>
<dbReference type="PANTHER" id="PTHR16465">
    <property type="entry name" value="NUCLEASE-RELATED"/>
    <property type="match status" value="1"/>
</dbReference>
<dbReference type="PANTHER" id="PTHR16465:SF0">
    <property type="entry name" value="ZINC FINGER MATRIN-TYPE PROTEIN 5"/>
    <property type="match status" value="1"/>
</dbReference>
<dbReference type="Pfam" id="PF00642">
    <property type="entry name" value="zf-CCCH"/>
    <property type="match status" value="1"/>
</dbReference>
<dbReference type="Pfam" id="PF06220">
    <property type="entry name" value="zf-U1"/>
    <property type="match status" value="1"/>
</dbReference>
<dbReference type="SMART" id="SM00356">
    <property type="entry name" value="ZnF_C3H1"/>
    <property type="match status" value="1"/>
</dbReference>
<dbReference type="SUPFAM" id="SSF57667">
    <property type="entry name" value="beta-beta-alpha zinc fingers"/>
    <property type="match status" value="1"/>
</dbReference>
<dbReference type="SUPFAM" id="SSF90229">
    <property type="entry name" value="CCCH zinc finger"/>
    <property type="match status" value="1"/>
</dbReference>
<dbReference type="PROSITE" id="PS50103">
    <property type="entry name" value="ZF_C3H1"/>
    <property type="match status" value="1"/>
</dbReference>